<gene>
    <name evidence="1" type="primary">rpmE</name>
    <name type="ordered locus">Ent638_4037</name>
</gene>
<proteinExistence type="inferred from homology"/>
<keyword id="KW-0479">Metal-binding</keyword>
<keyword id="KW-0687">Ribonucleoprotein</keyword>
<keyword id="KW-0689">Ribosomal protein</keyword>
<keyword id="KW-0694">RNA-binding</keyword>
<keyword id="KW-0699">rRNA-binding</keyword>
<keyword id="KW-0862">Zinc</keyword>
<evidence type="ECO:0000255" key="1">
    <source>
        <dbReference type="HAMAP-Rule" id="MF_00501"/>
    </source>
</evidence>
<evidence type="ECO:0000305" key="2"/>
<reference key="1">
    <citation type="journal article" date="2010" name="PLoS Genet.">
        <title>Genome sequence of the plant growth promoting endophytic bacterium Enterobacter sp. 638.</title>
        <authorList>
            <person name="Taghavi S."/>
            <person name="van der Lelie D."/>
            <person name="Hoffman A."/>
            <person name="Zhang Y.B."/>
            <person name="Walla M.D."/>
            <person name="Vangronsveld J."/>
            <person name="Newman L."/>
            <person name="Monchy S."/>
        </authorList>
    </citation>
    <scope>NUCLEOTIDE SEQUENCE [LARGE SCALE GENOMIC DNA]</scope>
    <source>
        <strain>638</strain>
    </source>
</reference>
<accession>A4WG62</accession>
<name>RL31_ENT38</name>
<protein>
    <recommendedName>
        <fullName evidence="1">Large ribosomal subunit protein bL31</fullName>
    </recommendedName>
    <alternativeName>
        <fullName evidence="2">50S ribosomal protein L31</fullName>
    </alternativeName>
</protein>
<organism>
    <name type="scientific">Enterobacter sp. (strain 638)</name>
    <dbReference type="NCBI Taxonomy" id="399742"/>
    <lineage>
        <taxon>Bacteria</taxon>
        <taxon>Pseudomonadati</taxon>
        <taxon>Pseudomonadota</taxon>
        <taxon>Gammaproteobacteria</taxon>
        <taxon>Enterobacterales</taxon>
        <taxon>Enterobacteriaceae</taxon>
        <taxon>Enterobacter</taxon>
    </lineage>
</organism>
<dbReference type="EMBL" id="CP000653">
    <property type="protein sequence ID" value="ABP62692.1"/>
    <property type="molecule type" value="Genomic_DNA"/>
</dbReference>
<dbReference type="RefSeq" id="WP_015960996.1">
    <property type="nucleotide sequence ID" value="NC_009436.1"/>
</dbReference>
<dbReference type="SMR" id="A4WG62"/>
<dbReference type="STRING" id="399742.Ent638_4037"/>
<dbReference type="GeneID" id="97603993"/>
<dbReference type="KEGG" id="ent:Ent638_4037"/>
<dbReference type="eggNOG" id="COG0254">
    <property type="taxonomic scope" value="Bacteria"/>
</dbReference>
<dbReference type="HOGENOM" id="CLU_114306_4_3_6"/>
<dbReference type="OrthoDB" id="9803251at2"/>
<dbReference type="Proteomes" id="UP000000230">
    <property type="component" value="Chromosome"/>
</dbReference>
<dbReference type="GO" id="GO:1990904">
    <property type="term" value="C:ribonucleoprotein complex"/>
    <property type="evidence" value="ECO:0007669"/>
    <property type="project" value="UniProtKB-KW"/>
</dbReference>
<dbReference type="GO" id="GO:0005840">
    <property type="term" value="C:ribosome"/>
    <property type="evidence" value="ECO:0007669"/>
    <property type="project" value="UniProtKB-KW"/>
</dbReference>
<dbReference type="GO" id="GO:0046872">
    <property type="term" value="F:metal ion binding"/>
    <property type="evidence" value="ECO:0007669"/>
    <property type="project" value="UniProtKB-KW"/>
</dbReference>
<dbReference type="GO" id="GO:0019843">
    <property type="term" value="F:rRNA binding"/>
    <property type="evidence" value="ECO:0007669"/>
    <property type="project" value="UniProtKB-KW"/>
</dbReference>
<dbReference type="GO" id="GO:0003735">
    <property type="term" value="F:structural constituent of ribosome"/>
    <property type="evidence" value="ECO:0007669"/>
    <property type="project" value="InterPro"/>
</dbReference>
<dbReference type="GO" id="GO:0006412">
    <property type="term" value="P:translation"/>
    <property type="evidence" value="ECO:0007669"/>
    <property type="project" value="UniProtKB-UniRule"/>
</dbReference>
<dbReference type="FunFam" id="4.10.830.30:FF:000001">
    <property type="entry name" value="50S ribosomal protein L31"/>
    <property type="match status" value="1"/>
</dbReference>
<dbReference type="Gene3D" id="4.10.830.30">
    <property type="entry name" value="Ribosomal protein L31"/>
    <property type="match status" value="1"/>
</dbReference>
<dbReference type="HAMAP" id="MF_00501">
    <property type="entry name" value="Ribosomal_bL31_1"/>
    <property type="match status" value="1"/>
</dbReference>
<dbReference type="InterPro" id="IPR034704">
    <property type="entry name" value="Ribosomal_bL28/bL31-like_sf"/>
</dbReference>
<dbReference type="InterPro" id="IPR002150">
    <property type="entry name" value="Ribosomal_bL31"/>
</dbReference>
<dbReference type="InterPro" id="IPR027491">
    <property type="entry name" value="Ribosomal_bL31_A"/>
</dbReference>
<dbReference type="InterPro" id="IPR042105">
    <property type="entry name" value="Ribosomal_bL31_sf"/>
</dbReference>
<dbReference type="NCBIfam" id="TIGR00105">
    <property type="entry name" value="L31"/>
    <property type="match status" value="1"/>
</dbReference>
<dbReference type="NCBIfam" id="NF000612">
    <property type="entry name" value="PRK00019.1"/>
    <property type="match status" value="1"/>
</dbReference>
<dbReference type="PANTHER" id="PTHR33280">
    <property type="entry name" value="50S RIBOSOMAL PROTEIN L31, CHLOROPLASTIC"/>
    <property type="match status" value="1"/>
</dbReference>
<dbReference type="PANTHER" id="PTHR33280:SF6">
    <property type="entry name" value="LARGE RIBOSOMAL SUBUNIT PROTEIN BL31A"/>
    <property type="match status" value="1"/>
</dbReference>
<dbReference type="Pfam" id="PF01197">
    <property type="entry name" value="Ribosomal_L31"/>
    <property type="match status" value="1"/>
</dbReference>
<dbReference type="PRINTS" id="PR01249">
    <property type="entry name" value="RIBOSOMALL31"/>
</dbReference>
<dbReference type="SUPFAM" id="SSF143800">
    <property type="entry name" value="L28p-like"/>
    <property type="match status" value="1"/>
</dbReference>
<dbReference type="PROSITE" id="PS01143">
    <property type="entry name" value="RIBOSOMAL_L31"/>
    <property type="match status" value="1"/>
</dbReference>
<sequence length="70" mass="7799">MKKDIHPKYDFITANCSCGNAIKIRSTVGHDLNLDVCGQCHPFYTGKQRDVATGGRVDRFNKRFSIPGAK</sequence>
<feature type="chain" id="PRO_1000126623" description="Large ribosomal subunit protein bL31">
    <location>
        <begin position="1"/>
        <end position="70"/>
    </location>
</feature>
<feature type="binding site" evidence="1">
    <location>
        <position position="16"/>
    </location>
    <ligand>
        <name>Zn(2+)</name>
        <dbReference type="ChEBI" id="CHEBI:29105"/>
    </ligand>
</feature>
<feature type="binding site" evidence="1">
    <location>
        <position position="18"/>
    </location>
    <ligand>
        <name>Zn(2+)</name>
        <dbReference type="ChEBI" id="CHEBI:29105"/>
    </ligand>
</feature>
<feature type="binding site" evidence="1">
    <location>
        <position position="37"/>
    </location>
    <ligand>
        <name>Zn(2+)</name>
        <dbReference type="ChEBI" id="CHEBI:29105"/>
    </ligand>
</feature>
<feature type="binding site" evidence="1">
    <location>
        <position position="40"/>
    </location>
    <ligand>
        <name>Zn(2+)</name>
        <dbReference type="ChEBI" id="CHEBI:29105"/>
    </ligand>
</feature>
<comment type="function">
    <text evidence="1">Binds the 23S rRNA.</text>
</comment>
<comment type="cofactor">
    <cofactor evidence="1">
        <name>Zn(2+)</name>
        <dbReference type="ChEBI" id="CHEBI:29105"/>
    </cofactor>
    <text evidence="1">Binds 1 zinc ion per subunit.</text>
</comment>
<comment type="subunit">
    <text evidence="1">Part of the 50S ribosomal subunit.</text>
</comment>
<comment type="similarity">
    <text evidence="1">Belongs to the bacterial ribosomal protein bL31 family. Type A subfamily.</text>
</comment>